<protein>
    <recommendedName>
        <fullName evidence="1">Phosphoribosylaminoimidazole-succinocarboxamide synthase</fullName>
        <ecNumber evidence="1">6.3.2.6</ecNumber>
    </recommendedName>
    <alternativeName>
        <fullName evidence="1">SAICAR synthetase</fullName>
    </alternativeName>
</protein>
<comment type="catalytic activity">
    <reaction evidence="1">
        <text>5-amino-1-(5-phospho-D-ribosyl)imidazole-4-carboxylate + L-aspartate + ATP = (2S)-2-[5-amino-1-(5-phospho-beta-D-ribosyl)imidazole-4-carboxamido]succinate + ADP + phosphate + 2 H(+)</text>
        <dbReference type="Rhea" id="RHEA:22628"/>
        <dbReference type="ChEBI" id="CHEBI:15378"/>
        <dbReference type="ChEBI" id="CHEBI:29991"/>
        <dbReference type="ChEBI" id="CHEBI:30616"/>
        <dbReference type="ChEBI" id="CHEBI:43474"/>
        <dbReference type="ChEBI" id="CHEBI:58443"/>
        <dbReference type="ChEBI" id="CHEBI:77657"/>
        <dbReference type="ChEBI" id="CHEBI:456216"/>
        <dbReference type="EC" id="6.3.2.6"/>
    </reaction>
</comment>
<comment type="pathway">
    <text evidence="1">Purine metabolism; IMP biosynthesis via de novo pathway; 5-amino-1-(5-phospho-D-ribosyl)imidazole-4-carboxamide from 5-amino-1-(5-phospho-D-ribosyl)imidazole-4-carboxylate: step 1/2.</text>
</comment>
<comment type="similarity">
    <text evidence="1">Belongs to the SAICAR synthetase family.</text>
</comment>
<gene>
    <name evidence="1" type="primary">purC</name>
    <name type="ordered locus">SBO_2493</name>
</gene>
<keyword id="KW-0067">ATP-binding</keyword>
<keyword id="KW-0436">Ligase</keyword>
<keyword id="KW-0547">Nucleotide-binding</keyword>
<keyword id="KW-0658">Purine biosynthesis</keyword>
<organism>
    <name type="scientific">Shigella boydii serotype 4 (strain Sb227)</name>
    <dbReference type="NCBI Taxonomy" id="300268"/>
    <lineage>
        <taxon>Bacteria</taxon>
        <taxon>Pseudomonadati</taxon>
        <taxon>Pseudomonadota</taxon>
        <taxon>Gammaproteobacteria</taxon>
        <taxon>Enterobacterales</taxon>
        <taxon>Enterobacteriaceae</taxon>
        <taxon>Shigella</taxon>
    </lineage>
</organism>
<accession>Q31Y15</accession>
<proteinExistence type="inferred from homology"/>
<dbReference type="EC" id="6.3.2.6" evidence="1"/>
<dbReference type="EMBL" id="CP000036">
    <property type="protein sequence ID" value="ABB67043.1"/>
    <property type="molecule type" value="Genomic_DNA"/>
</dbReference>
<dbReference type="RefSeq" id="WP_004985419.1">
    <property type="nucleotide sequence ID" value="NC_007613.1"/>
</dbReference>
<dbReference type="SMR" id="Q31Y15"/>
<dbReference type="KEGG" id="sbo:SBO_2493"/>
<dbReference type="HOGENOM" id="CLU_061495_2_0_6"/>
<dbReference type="UniPathway" id="UPA00074">
    <property type="reaction ID" value="UER00131"/>
</dbReference>
<dbReference type="Proteomes" id="UP000007067">
    <property type="component" value="Chromosome"/>
</dbReference>
<dbReference type="GO" id="GO:0005829">
    <property type="term" value="C:cytosol"/>
    <property type="evidence" value="ECO:0007669"/>
    <property type="project" value="TreeGrafter"/>
</dbReference>
<dbReference type="GO" id="GO:0005524">
    <property type="term" value="F:ATP binding"/>
    <property type="evidence" value="ECO:0007669"/>
    <property type="project" value="UniProtKB-KW"/>
</dbReference>
<dbReference type="GO" id="GO:0004639">
    <property type="term" value="F:phosphoribosylaminoimidazolesuccinocarboxamide synthase activity"/>
    <property type="evidence" value="ECO:0007669"/>
    <property type="project" value="UniProtKB-UniRule"/>
</dbReference>
<dbReference type="GO" id="GO:0006189">
    <property type="term" value="P:'de novo' IMP biosynthetic process"/>
    <property type="evidence" value="ECO:0007669"/>
    <property type="project" value="UniProtKB-UniRule"/>
</dbReference>
<dbReference type="GO" id="GO:0009236">
    <property type="term" value="P:cobalamin biosynthetic process"/>
    <property type="evidence" value="ECO:0007669"/>
    <property type="project" value="InterPro"/>
</dbReference>
<dbReference type="CDD" id="cd01415">
    <property type="entry name" value="SAICAR_synt_PurC"/>
    <property type="match status" value="1"/>
</dbReference>
<dbReference type="FunFam" id="3.30.200.20:FF:000086">
    <property type="entry name" value="Phosphoribosylaminoimidazole-succinocarboxamide synthase"/>
    <property type="match status" value="1"/>
</dbReference>
<dbReference type="FunFam" id="3.30.470.20:FF:000006">
    <property type="entry name" value="Phosphoribosylaminoimidazole-succinocarboxamide synthase"/>
    <property type="match status" value="1"/>
</dbReference>
<dbReference type="Gene3D" id="3.30.470.20">
    <property type="entry name" value="ATP-grasp fold, B domain"/>
    <property type="match status" value="1"/>
</dbReference>
<dbReference type="Gene3D" id="3.30.200.20">
    <property type="entry name" value="Phosphorylase Kinase, domain 1"/>
    <property type="match status" value="1"/>
</dbReference>
<dbReference type="HAMAP" id="MF_00137">
    <property type="entry name" value="SAICAR_synth"/>
    <property type="match status" value="1"/>
</dbReference>
<dbReference type="InterPro" id="IPR028923">
    <property type="entry name" value="SAICAR_synt/ADE2_N"/>
</dbReference>
<dbReference type="InterPro" id="IPR033934">
    <property type="entry name" value="SAICAR_synt_PurC"/>
</dbReference>
<dbReference type="InterPro" id="IPR001636">
    <property type="entry name" value="SAICAR_synth"/>
</dbReference>
<dbReference type="InterPro" id="IPR050089">
    <property type="entry name" value="SAICAR_synthetase"/>
</dbReference>
<dbReference type="InterPro" id="IPR018236">
    <property type="entry name" value="SAICAR_synthetase_CS"/>
</dbReference>
<dbReference type="NCBIfam" id="TIGR00081">
    <property type="entry name" value="purC"/>
    <property type="match status" value="1"/>
</dbReference>
<dbReference type="PANTHER" id="PTHR43599">
    <property type="entry name" value="MULTIFUNCTIONAL PROTEIN ADE2"/>
    <property type="match status" value="1"/>
</dbReference>
<dbReference type="PANTHER" id="PTHR43599:SF3">
    <property type="entry name" value="SI:DKEY-6E2.2"/>
    <property type="match status" value="1"/>
</dbReference>
<dbReference type="Pfam" id="PF01259">
    <property type="entry name" value="SAICAR_synt"/>
    <property type="match status" value="1"/>
</dbReference>
<dbReference type="SUPFAM" id="SSF56104">
    <property type="entry name" value="SAICAR synthase-like"/>
    <property type="match status" value="1"/>
</dbReference>
<dbReference type="PROSITE" id="PS01057">
    <property type="entry name" value="SAICAR_SYNTHETASE_1"/>
    <property type="match status" value="1"/>
</dbReference>
<dbReference type="PROSITE" id="PS01058">
    <property type="entry name" value="SAICAR_SYNTHETASE_2"/>
    <property type="match status" value="1"/>
</dbReference>
<reference key="1">
    <citation type="journal article" date="2005" name="Nucleic Acids Res.">
        <title>Genome dynamics and diversity of Shigella species, the etiologic agents of bacillary dysentery.</title>
        <authorList>
            <person name="Yang F."/>
            <person name="Yang J."/>
            <person name="Zhang X."/>
            <person name="Chen L."/>
            <person name="Jiang Y."/>
            <person name="Yan Y."/>
            <person name="Tang X."/>
            <person name="Wang J."/>
            <person name="Xiong Z."/>
            <person name="Dong J."/>
            <person name="Xue Y."/>
            <person name="Zhu Y."/>
            <person name="Xu X."/>
            <person name="Sun L."/>
            <person name="Chen S."/>
            <person name="Nie H."/>
            <person name="Peng J."/>
            <person name="Xu J."/>
            <person name="Wang Y."/>
            <person name="Yuan Z."/>
            <person name="Wen Y."/>
            <person name="Yao Z."/>
            <person name="Shen Y."/>
            <person name="Qiang B."/>
            <person name="Hou Y."/>
            <person name="Yu J."/>
            <person name="Jin Q."/>
        </authorList>
    </citation>
    <scope>NUCLEOTIDE SEQUENCE [LARGE SCALE GENOMIC DNA]</scope>
    <source>
        <strain>Sb227</strain>
    </source>
</reference>
<feature type="chain" id="PRO_1000018777" description="Phosphoribosylaminoimidazole-succinocarboxamide synthase">
    <location>
        <begin position="1"/>
        <end position="237"/>
    </location>
</feature>
<sequence>MQKQAELYRGKAKTVYSTENPDLLVLEFRNDTSAGDGARIEQFDRKGMVNNKFNYFIMSKLAEAGIPTQMERLLSDTECLVKKLDMVPVECVVRNRAAGSLVKRLGIEEGIELNPPLFDLFLKNDAMHDPMVNESYCETFGWVSKENLARMKELTYKANDVLKKRFDDAGLILVDFKLEFGLYKGEVVLGDEFSPDGSRLWDKETLEKMDKDRFRQSLGGLIEAYEAVARRLGVQLD</sequence>
<evidence type="ECO:0000255" key="1">
    <source>
        <dbReference type="HAMAP-Rule" id="MF_00137"/>
    </source>
</evidence>
<name>PUR7_SHIBS</name>